<comment type="pathway">
    <text>Slime biogenesis; slime polysaccharide biosynthesis.</text>
</comment>
<dbReference type="EMBL" id="U38473">
    <property type="protein sequence ID" value="AAC77845.1"/>
    <property type="molecule type" value="Genomic_DNA"/>
</dbReference>
<dbReference type="EMBL" id="U00096">
    <property type="protein sequence ID" value="AAC75111.1"/>
    <property type="molecule type" value="Genomic_DNA"/>
</dbReference>
<dbReference type="EMBL" id="AP009048">
    <property type="protein sequence ID" value="BAA15906.1"/>
    <property type="molecule type" value="Genomic_DNA"/>
</dbReference>
<dbReference type="PIR" id="F55239">
    <property type="entry name" value="F55239"/>
</dbReference>
<dbReference type="RefSeq" id="NP_416554.1">
    <property type="nucleotide sequence ID" value="NC_000913.3"/>
</dbReference>
<dbReference type="RefSeq" id="WP_000699693.1">
    <property type="nucleotide sequence ID" value="NZ_LN832404.1"/>
</dbReference>
<dbReference type="SMR" id="P32057"/>
<dbReference type="BioGRID" id="4263310">
    <property type="interactions" value="342"/>
</dbReference>
<dbReference type="DIP" id="DIP-11124N"/>
<dbReference type="FunCoup" id="P32057">
    <property type="interactions" value="99"/>
</dbReference>
<dbReference type="IntAct" id="P32057">
    <property type="interactions" value="3"/>
</dbReference>
<dbReference type="STRING" id="511145.b2050"/>
<dbReference type="CAZy" id="GT4">
    <property type="family name" value="Glycosyltransferase Family 4"/>
</dbReference>
<dbReference type="PaxDb" id="511145-b2050"/>
<dbReference type="DNASU" id="946588"/>
<dbReference type="EnsemblBacteria" id="AAC75111">
    <property type="protein sequence ID" value="AAC75111"/>
    <property type="gene ID" value="b2050"/>
</dbReference>
<dbReference type="GeneID" id="946588"/>
<dbReference type="KEGG" id="ecj:JW2035"/>
<dbReference type="KEGG" id="eco:b2050"/>
<dbReference type="KEGG" id="ecoc:C3026_11540"/>
<dbReference type="PATRIC" id="fig|1411691.4.peg.201"/>
<dbReference type="EchoBASE" id="EB1738"/>
<dbReference type="eggNOG" id="COG0297">
    <property type="taxonomic scope" value="Bacteria"/>
</dbReference>
<dbReference type="HOGENOM" id="CLU_009583_11_5_6"/>
<dbReference type="InParanoid" id="P32057"/>
<dbReference type="OMA" id="WMAREGH"/>
<dbReference type="OrthoDB" id="9787293at2"/>
<dbReference type="PhylomeDB" id="P32057"/>
<dbReference type="BioCyc" id="EcoCyc:EG11790-MONOMER"/>
<dbReference type="BioCyc" id="MetaCyc:EG11790-MONOMER"/>
<dbReference type="UniPathway" id="UPA00936"/>
<dbReference type="PRO" id="PR:P32057"/>
<dbReference type="Proteomes" id="UP000000625">
    <property type="component" value="Chromosome"/>
</dbReference>
<dbReference type="GO" id="GO:0046920">
    <property type="term" value="F:alpha-(1-&gt;3)-fucosyltransferase activity"/>
    <property type="evidence" value="ECO:0000314"/>
    <property type="project" value="EcoCyc"/>
</dbReference>
<dbReference type="GO" id="GO:0009242">
    <property type="term" value="P:colanic acid biosynthetic process"/>
    <property type="evidence" value="ECO:0000317"/>
    <property type="project" value="EcoCyc"/>
</dbReference>
<dbReference type="GO" id="GO:0009103">
    <property type="term" value="P:lipopolysaccharide biosynthetic process"/>
    <property type="evidence" value="ECO:0007669"/>
    <property type="project" value="UniProtKB-KW"/>
</dbReference>
<dbReference type="GO" id="GO:0045228">
    <property type="term" value="P:slime layer polysaccharide biosynthetic process"/>
    <property type="evidence" value="ECO:0007669"/>
    <property type="project" value="UniProtKB-UniPathway"/>
</dbReference>
<dbReference type="CDD" id="cd03794">
    <property type="entry name" value="GT4_WbuB-like"/>
    <property type="match status" value="1"/>
</dbReference>
<dbReference type="Gene3D" id="3.40.50.2000">
    <property type="entry name" value="Glycogen Phosphorylase B"/>
    <property type="match status" value="2"/>
</dbReference>
<dbReference type="InterPro" id="IPR023910">
    <property type="entry name" value="Colanic_acid_synth_WcaI"/>
</dbReference>
<dbReference type="InterPro" id="IPR001296">
    <property type="entry name" value="Glyco_trans_1"/>
</dbReference>
<dbReference type="InterPro" id="IPR028098">
    <property type="entry name" value="Glyco_trans_4-like_N"/>
</dbReference>
<dbReference type="InterPro" id="IPR050194">
    <property type="entry name" value="Glycosyltransferase_grp1"/>
</dbReference>
<dbReference type="NCBIfam" id="NF007640">
    <property type="entry name" value="PRK10307.1"/>
    <property type="match status" value="1"/>
</dbReference>
<dbReference type="NCBIfam" id="TIGR04007">
    <property type="entry name" value="wcaI"/>
    <property type="match status" value="1"/>
</dbReference>
<dbReference type="PANTHER" id="PTHR45947">
    <property type="entry name" value="SULFOQUINOVOSYL TRANSFERASE SQD2"/>
    <property type="match status" value="1"/>
</dbReference>
<dbReference type="PANTHER" id="PTHR45947:SF3">
    <property type="entry name" value="SULFOQUINOVOSYL TRANSFERASE SQD2"/>
    <property type="match status" value="1"/>
</dbReference>
<dbReference type="Pfam" id="PF13579">
    <property type="entry name" value="Glyco_trans_4_4"/>
    <property type="match status" value="1"/>
</dbReference>
<dbReference type="Pfam" id="PF00534">
    <property type="entry name" value="Glycos_transf_1"/>
    <property type="match status" value="1"/>
</dbReference>
<dbReference type="SUPFAM" id="SSF53756">
    <property type="entry name" value="UDP-Glycosyltransferase/glycogen phosphorylase"/>
    <property type="match status" value="1"/>
</dbReference>
<sequence>MKILVYGINYSPELTGIGKYTGEMVEWLAAQGHEVRVITAPPYYPQWQVGENYSAWRYKREEGAATVWRCPLYVPKQPSTLKRLLHLGSFAVSSFFPLMAQRRWKPDRIIGVVPTLFCAPGMRLLAKLSGARTVLHIQDYEVDAMLGLGLAGKGKGGKVAQLATAFERSGLHNVDNVSTISRSMMNKAIEKGVAAENVIFFPNWSEIARFQHVADADVDALRNQLDLPDNKKIILYSGNIGEKQGLENVIEAADRLRDEPLIFAIVGQGGGKARLEKMAQQRGLRNMQFFPLQSYDALPALLKMGDCHLVVQKRGAADAVLPSKLTNILAVGGNAVITAEAYTELGQLCETFPGIAVCVEPESVEALVAGIRQALLLPKHNTVAREYAERTLDKENVLRQFINDIRG</sequence>
<gene>
    <name type="primary">wcaI</name>
    <name type="synonym">yefD</name>
    <name type="ordered locus">b2050</name>
    <name type="ordered locus">JW2035</name>
</gene>
<keyword id="KW-0448">Lipopolysaccharide biosynthesis</keyword>
<keyword id="KW-1185">Reference proteome</keyword>
<keyword id="KW-0808">Transferase</keyword>
<feature type="chain" id="PRO_0000065957" description="Putative colanic acid biosynthesis glycosyl transferase WcaI">
    <location>
        <begin position="1"/>
        <end position="407"/>
    </location>
</feature>
<protein>
    <recommendedName>
        <fullName>Putative colanic acid biosynthesis glycosyl transferase WcaI</fullName>
    </recommendedName>
</protein>
<organism>
    <name type="scientific">Escherichia coli (strain K12)</name>
    <dbReference type="NCBI Taxonomy" id="83333"/>
    <lineage>
        <taxon>Bacteria</taxon>
        <taxon>Pseudomonadati</taxon>
        <taxon>Pseudomonadota</taxon>
        <taxon>Gammaproteobacteria</taxon>
        <taxon>Enterobacterales</taxon>
        <taxon>Enterobacteriaceae</taxon>
        <taxon>Escherichia</taxon>
    </lineage>
</organism>
<accession>P32057</accession>
<reference key="1">
    <citation type="journal article" date="1994" name="Mol. Biol. Evol.">
        <title>Evidence for effect of random genetic drift on G+C content after lateral transfer of fucose pathway genes to Escherichia coli K-12.</title>
        <authorList>
            <person name="Aoyama K."/>
            <person name="Haase A.M."/>
            <person name="Reeves P.R."/>
        </authorList>
    </citation>
    <scope>NUCLEOTIDE SEQUENCE [GENOMIC DNA]</scope>
    <source>
        <strain>K12</strain>
    </source>
</reference>
<reference key="2">
    <citation type="journal article" date="1996" name="J. Bacteriol.">
        <title>Organization of the Escherichia coli K-12 gene cluster responsible for production of the extracellular polysaccharide colanic acid.</title>
        <authorList>
            <person name="Stevenson G."/>
            <person name="Andrianopoulos K."/>
            <person name="Hobbs M."/>
            <person name="Reeves P.R."/>
        </authorList>
    </citation>
    <scope>NUCLEOTIDE SEQUENCE [GENOMIC DNA]</scope>
    <source>
        <strain>K12</strain>
    </source>
</reference>
<reference key="3">
    <citation type="journal article" date="1996" name="DNA Res.">
        <title>A 460-kb DNA sequence of the Escherichia coli K-12 genome corresponding to the 40.1-50.0 min region on the linkage map.</title>
        <authorList>
            <person name="Itoh T."/>
            <person name="Aiba H."/>
            <person name="Baba T."/>
            <person name="Fujita K."/>
            <person name="Hayashi K."/>
            <person name="Inada T."/>
            <person name="Isono K."/>
            <person name="Kasai H."/>
            <person name="Kimura S."/>
            <person name="Kitakawa M."/>
            <person name="Kitagawa M."/>
            <person name="Makino K."/>
            <person name="Miki T."/>
            <person name="Mizobuchi K."/>
            <person name="Mori H."/>
            <person name="Mori T."/>
            <person name="Motomura K."/>
            <person name="Nakade S."/>
            <person name="Nakamura Y."/>
            <person name="Nashimoto H."/>
            <person name="Nishio Y."/>
            <person name="Oshima T."/>
            <person name="Saito N."/>
            <person name="Sampei G."/>
            <person name="Seki Y."/>
            <person name="Sivasundaram S."/>
            <person name="Tagami H."/>
            <person name="Takeda J."/>
            <person name="Takemoto K."/>
            <person name="Wada C."/>
            <person name="Yamamoto Y."/>
            <person name="Horiuchi T."/>
        </authorList>
    </citation>
    <scope>NUCLEOTIDE SEQUENCE [LARGE SCALE GENOMIC DNA]</scope>
    <source>
        <strain>K12 / W3110 / ATCC 27325 / DSM 5911</strain>
    </source>
</reference>
<reference key="4">
    <citation type="journal article" date="1997" name="Science">
        <title>The complete genome sequence of Escherichia coli K-12.</title>
        <authorList>
            <person name="Blattner F.R."/>
            <person name="Plunkett G. III"/>
            <person name="Bloch C.A."/>
            <person name="Perna N.T."/>
            <person name="Burland V."/>
            <person name="Riley M."/>
            <person name="Collado-Vides J."/>
            <person name="Glasner J.D."/>
            <person name="Rode C.K."/>
            <person name="Mayhew G.F."/>
            <person name="Gregor J."/>
            <person name="Davis N.W."/>
            <person name="Kirkpatrick H.A."/>
            <person name="Goeden M.A."/>
            <person name="Rose D.J."/>
            <person name="Mau B."/>
            <person name="Shao Y."/>
        </authorList>
    </citation>
    <scope>NUCLEOTIDE SEQUENCE [LARGE SCALE GENOMIC DNA]</scope>
    <source>
        <strain>K12 / MG1655 / ATCC 47076</strain>
    </source>
</reference>
<reference key="5">
    <citation type="journal article" date="2006" name="Mol. Syst. Biol.">
        <title>Highly accurate genome sequences of Escherichia coli K-12 strains MG1655 and W3110.</title>
        <authorList>
            <person name="Hayashi K."/>
            <person name="Morooka N."/>
            <person name="Yamamoto Y."/>
            <person name="Fujita K."/>
            <person name="Isono K."/>
            <person name="Choi S."/>
            <person name="Ohtsubo E."/>
            <person name="Baba T."/>
            <person name="Wanner B.L."/>
            <person name="Mori H."/>
            <person name="Horiuchi T."/>
        </authorList>
    </citation>
    <scope>NUCLEOTIDE SEQUENCE [LARGE SCALE GENOMIC DNA]</scope>
    <source>
        <strain>K12 / W3110 / ATCC 27325 / DSM 5911</strain>
    </source>
</reference>
<proteinExistence type="predicted"/>
<name>WCAI_ECOLI</name>